<proteinExistence type="evidence at protein level"/>
<accession>Q8IWT3</accession>
<accession>O75188</accession>
<accession>Q5TCY3</accession>
<accession>Q68CP2</accession>
<accession>Q68D92</accession>
<accession>Q8N3W9</accession>
<accession>Q9BU56</accession>
<name>CUL9_HUMAN</name>
<dbReference type="EMBL" id="AY145132">
    <property type="protein sequence ID" value="AAN61516.1"/>
    <property type="molecule type" value="mRNA"/>
</dbReference>
<dbReference type="EMBL" id="AJ318215">
    <property type="protein sequence ID" value="CAC85756.1"/>
    <property type="molecule type" value="mRNA"/>
</dbReference>
<dbReference type="EMBL" id="CR749511">
    <property type="protein sequence ID" value="CAH18328.1"/>
    <property type="molecule type" value="mRNA"/>
</dbReference>
<dbReference type="EMBL" id="CR749841">
    <property type="protein sequence ID" value="CAH18696.1"/>
    <property type="molecule type" value="mRNA"/>
</dbReference>
<dbReference type="EMBL" id="AL133375">
    <property type="status" value="NOT_ANNOTATED_CDS"/>
    <property type="molecule type" value="Genomic_DNA"/>
</dbReference>
<dbReference type="EMBL" id="CH471081">
    <property type="protein sequence ID" value="EAX04163.1"/>
    <property type="molecule type" value="Genomic_DNA"/>
</dbReference>
<dbReference type="EMBL" id="AK125228">
    <property type="protein sequence ID" value="BAC86090.1"/>
    <property type="status" value="ALT_SEQ"/>
    <property type="molecule type" value="mRNA"/>
</dbReference>
<dbReference type="EMBL" id="AK129649">
    <property type="protein sequence ID" value="BAC85207.1"/>
    <property type="status" value="ALT_SEQ"/>
    <property type="molecule type" value="mRNA"/>
</dbReference>
<dbReference type="EMBL" id="AB014608">
    <property type="protein sequence ID" value="BAA31683.3"/>
    <property type="molecule type" value="mRNA"/>
</dbReference>
<dbReference type="EMBL" id="BC002879">
    <property type="protein sequence ID" value="AAH02879.2"/>
    <property type="molecule type" value="mRNA"/>
</dbReference>
<dbReference type="CCDS" id="CCDS4890.1">
    <molecule id="Q8IWT3-1"/>
</dbReference>
<dbReference type="PIR" id="T00350">
    <property type="entry name" value="T00350"/>
</dbReference>
<dbReference type="RefSeq" id="NP_055904.1">
    <molecule id="Q8IWT3-1"/>
    <property type="nucleotide sequence ID" value="NM_015089.4"/>
</dbReference>
<dbReference type="RefSeq" id="XP_047274431.1">
    <molecule id="Q8IWT3-1"/>
    <property type="nucleotide sequence ID" value="XM_047418475.1"/>
</dbReference>
<dbReference type="RefSeq" id="XP_047274435.1">
    <molecule id="Q8IWT3-3"/>
    <property type="nucleotide sequence ID" value="XM_047418479.1"/>
</dbReference>
<dbReference type="PDB" id="2JUF">
    <property type="method" value="NMR"/>
    <property type="chains" value="A=366-466"/>
</dbReference>
<dbReference type="PDB" id="8Q7E">
    <property type="method" value="EM"/>
    <property type="resolution" value="4.40 A"/>
    <property type="chains" value="A/B/E/F/I/J=1-2517"/>
</dbReference>
<dbReference type="PDB" id="8Q7H">
    <property type="method" value="EM"/>
    <property type="resolution" value="4.10 A"/>
    <property type="chains" value="A/B=1-2517"/>
</dbReference>
<dbReference type="PDB" id="8RHZ">
    <property type="method" value="EM"/>
    <property type="resolution" value="3.37 A"/>
    <property type="chains" value="A/B=1-2517"/>
</dbReference>
<dbReference type="PDBsum" id="2JUF"/>
<dbReference type="PDBsum" id="8Q7E"/>
<dbReference type="PDBsum" id="8Q7H"/>
<dbReference type="PDBsum" id="8RHZ"/>
<dbReference type="BMRB" id="Q8IWT3"/>
<dbReference type="EMDB" id="EMD-18214"/>
<dbReference type="EMDB" id="EMD-18216"/>
<dbReference type="EMDB" id="EMD-18217"/>
<dbReference type="EMDB" id="EMD-18218"/>
<dbReference type="EMDB" id="EMD-18220"/>
<dbReference type="EMDB" id="EMD-18221"/>
<dbReference type="EMDB" id="EMD-18222"/>
<dbReference type="EMDB" id="EMD-18223"/>
<dbReference type="EMDB" id="EMD-19179"/>
<dbReference type="SMR" id="Q8IWT3"/>
<dbReference type="BioGRID" id="116736">
    <property type="interactions" value="178"/>
</dbReference>
<dbReference type="CORUM" id="Q8IWT3"/>
<dbReference type="FunCoup" id="Q8IWT3">
    <property type="interactions" value="425"/>
</dbReference>
<dbReference type="IntAct" id="Q8IWT3">
    <property type="interactions" value="60"/>
</dbReference>
<dbReference type="MINT" id="Q8IWT3"/>
<dbReference type="STRING" id="9606.ENSP00000252050"/>
<dbReference type="GlyGen" id="Q8IWT3">
    <property type="glycosylation" value="2 sites, 1 N-linked glycan (1 site)"/>
</dbReference>
<dbReference type="iPTMnet" id="Q8IWT3"/>
<dbReference type="PhosphoSitePlus" id="Q8IWT3"/>
<dbReference type="BioMuta" id="CUL9"/>
<dbReference type="DMDM" id="57015409"/>
<dbReference type="jPOST" id="Q8IWT3"/>
<dbReference type="MassIVE" id="Q8IWT3"/>
<dbReference type="PaxDb" id="9606-ENSP00000252050"/>
<dbReference type="PeptideAtlas" id="Q8IWT3"/>
<dbReference type="ProteomicsDB" id="70891">
    <molecule id="Q8IWT3-1"/>
</dbReference>
<dbReference type="ProteomicsDB" id="70892">
    <molecule id="Q8IWT3-3"/>
</dbReference>
<dbReference type="Pumba" id="Q8IWT3"/>
<dbReference type="Antibodypedia" id="3078">
    <property type="antibodies" value="162 antibodies from 28 providers"/>
</dbReference>
<dbReference type="DNASU" id="23113"/>
<dbReference type="Ensembl" id="ENST00000252050.9">
    <molecule id="Q8IWT3-1"/>
    <property type="protein sequence ID" value="ENSP00000252050.4"/>
    <property type="gene ID" value="ENSG00000112659.14"/>
</dbReference>
<dbReference type="GeneID" id="23113"/>
<dbReference type="KEGG" id="hsa:23113"/>
<dbReference type="MANE-Select" id="ENST00000252050.9">
    <property type="protein sequence ID" value="ENSP00000252050.4"/>
    <property type="RefSeq nucleotide sequence ID" value="NM_015089.4"/>
    <property type="RefSeq protein sequence ID" value="NP_055904.1"/>
</dbReference>
<dbReference type="UCSC" id="uc003ouk.4">
    <molecule id="Q8IWT3-1"/>
    <property type="organism name" value="human"/>
</dbReference>
<dbReference type="AGR" id="HGNC:15982"/>
<dbReference type="CTD" id="23113"/>
<dbReference type="DisGeNET" id="23113"/>
<dbReference type="GeneCards" id="CUL9"/>
<dbReference type="HGNC" id="HGNC:15982">
    <property type="gene designation" value="CUL9"/>
</dbReference>
<dbReference type="HPA" id="ENSG00000112659">
    <property type="expression patterns" value="Low tissue specificity"/>
</dbReference>
<dbReference type="MIM" id="607489">
    <property type="type" value="gene"/>
</dbReference>
<dbReference type="neXtProt" id="NX_Q8IWT3"/>
<dbReference type="OpenTargets" id="ENSG00000112659"/>
<dbReference type="PharmGKB" id="PA164718328"/>
<dbReference type="VEuPathDB" id="HostDB:ENSG00000112659"/>
<dbReference type="eggNOG" id="KOG1815">
    <property type="taxonomic scope" value="Eukaryota"/>
</dbReference>
<dbReference type="GeneTree" id="ENSGT00940000153954"/>
<dbReference type="InParanoid" id="Q8IWT3"/>
<dbReference type="OMA" id="KPWKPNH"/>
<dbReference type="OrthoDB" id="1431934at2759"/>
<dbReference type="PAN-GO" id="Q8IWT3">
    <property type="GO annotations" value="3 GO annotations based on evolutionary models"/>
</dbReference>
<dbReference type="PhylomeDB" id="Q8IWT3"/>
<dbReference type="TreeFam" id="TF101154"/>
<dbReference type="PathwayCommons" id="Q8IWT3"/>
<dbReference type="Reactome" id="R-HSA-8951664">
    <property type="pathway name" value="Neddylation"/>
</dbReference>
<dbReference type="SignaLink" id="Q8IWT3"/>
<dbReference type="SIGNOR" id="Q8IWT3"/>
<dbReference type="BioGRID-ORCS" id="23113">
    <property type="hits" value="18 hits in 1192 CRISPR screens"/>
</dbReference>
<dbReference type="ChiTaRS" id="CUL9">
    <property type="organism name" value="human"/>
</dbReference>
<dbReference type="EvolutionaryTrace" id="Q8IWT3"/>
<dbReference type="GeneWiki" id="PARC_(gene)"/>
<dbReference type="GenomeRNAi" id="23113"/>
<dbReference type="Pharos" id="Q8IWT3">
    <property type="development level" value="Tbio"/>
</dbReference>
<dbReference type="PRO" id="PR:Q8IWT3"/>
<dbReference type="Proteomes" id="UP000005640">
    <property type="component" value="Chromosome 6"/>
</dbReference>
<dbReference type="RNAct" id="Q8IWT3">
    <property type="molecule type" value="protein"/>
</dbReference>
<dbReference type="Bgee" id="ENSG00000112659">
    <property type="expression patterns" value="Expressed in right testis and 184 other cell types or tissues"/>
</dbReference>
<dbReference type="ExpressionAtlas" id="Q8IWT3">
    <property type="expression patterns" value="baseline and differential"/>
</dbReference>
<dbReference type="GO" id="GO:0031461">
    <property type="term" value="C:cullin-RING ubiquitin ligase complex"/>
    <property type="evidence" value="ECO:0000314"/>
    <property type="project" value="UniProtKB"/>
</dbReference>
<dbReference type="GO" id="GO:0005829">
    <property type="term" value="C:cytosol"/>
    <property type="evidence" value="ECO:0000314"/>
    <property type="project" value="HPA"/>
</dbReference>
<dbReference type="GO" id="GO:0005524">
    <property type="term" value="F:ATP binding"/>
    <property type="evidence" value="ECO:0007669"/>
    <property type="project" value="UniProtKB-KW"/>
</dbReference>
<dbReference type="GO" id="GO:0061630">
    <property type="term" value="F:ubiquitin protein ligase activity"/>
    <property type="evidence" value="ECO:0000304"/>
    <property type="project" value="Reactome"/>
</dbReference>
<dbReference type="GO" id="GO:0031625">
    <property type="term" value="F:ubiquitin protein ligase binding"/>
    <property type="evidence" value="ECO:0007669"/>
    <property type="project" value="InterPro"/>
</dbReference>
<dbReference type="GO" id="GO:0008270">
    <property type="term" value="F:zinc ion binding"/>
    <property type="evidence" value="ECO:0007669"/>
    <property type="project" value="UniProtKB-KW"/>
</dbReference>
<dbReference type="GO" id="GO:0000226">
    <property type="term" value="P:microtubule cytoskeleton organization"/>
    <property type="evidence" value="ECO:0000315"/>
    <property type="project" value="UniProtKB"/>
</dbReference>
<dbReference type="GO" id="GO:0016567">
    <property type="term" value="P:protein ubiquitination"/>
    <property type="evidence" value="ECO:0000314"/>
    <property type="project" value="UniProtKB"/>
</dbReference>
<dbReference type="GO" id="GO:0007088">
    <property type="term" value="P:regulation of mitotic nuclear division"/>
    <property type="evidence" value="ECO:0000315"/>
    <property type="project" value="UniProtKB"/>
</dbReference>
<dbReference type="GO" id="GO:0006511">
    <property type="term" value="P:ubiquitin-dependent protein catabolic process"/>
    <property type="evidence" value="ECO:0007669"/>
    <property type="project" value="InterPro"/>
</dbReference>
<dbReference type="CDD" id="cd20347">
    <property type="entry name" value="BRcat_RBR_CUL9"/>
    <property type="match status" value="1"/>
</dbReference>
<dbReference type="CDD" id="cd20359">
    <property type="entry name" value="Rcat_RBR_CUL9"/>
    <property type="match status" value="1"/>
</dbReference>
<dbReference type="CDD" id="cd16624">
    <property type="entry name" value="RING-HC_RBR_CUL9"/>
    <property type="match status" value="1"/>
</dbReference>
<dbReference type="FunFam" id="1.10.10.10:FF:000207">
    <property type="entry name" value="Cullin 9"/>
    <property type="match status" value="1"/>
</dbReference>
<dbReference type="FunFam" id="1.20.120.1750:FF:000014">
    <property type="entry name" value="Cullin 9"/>
    <property type="match status" value="1"/>
</dbReference>
<dbReference type="FunFam" id="2.60.120.260:FF:000046">
    <property type="entry name" value="Cullin 9"/>
    <property type="match status" value="1"/>
</dbReference>
<dbReference type="FunFam" id="3.30.230.130:FF:000009">
    <property type="entry name" value="Cullin 9"/>
    <property type="match status" value="1"/>
</dbReference>
<dbReference type="FunFam" id="3.30.40.10:FF:000278">
    <property type="entry name" value="cullin-9 isoform X2"/>
    <property type="match status" value="1"/>
</dbReference>
<dbReference type="FunFam" id="2.30.30.30:FF:000015">
    <property type="entry name" value="E3 ubiquitin-protein ligase HERC2"/>
    <property type="match status" value="1"/>
</dbReference>
<dbReference type="Gene3D" id="1.20.120.1750">
    <property type="match status" value="1"/>
</dbReference>
<dbReference type="Gene3D" id="2.30.30.30">
    <property type="match status" value="1"/>
</dbReference>
<dbReference type="Gene3D" id="3.30.230.130">
    <property type="entry name" value="Cullin, Chain C, Domain 2"/>
    <property type="match status" value="1"/>
</dbReference>
<dbReference type="Gene3D" id="2.60.120.260">
    <property type="entry name" value="Galactose-binding domain-like"/>
    <property type="match status" value="1"/>
</dbReference>
<dbReference type="Gene3D" id="1.25.10.10">
    <property type="entry name" value="Leucine-rich Repeat Variant"/>
    <property type="match status" value="1"/>
</dbReference>
<dbReference type="Gene3D" id="1.10.10.10">
    <property type="entry name" value="Winged helix-like DNA-binding domain superfamily/Winged helix DNA-binding domain"/>
    <property type="match status" value="1"/>
</dbReference>
<dbReference type="Gene3D" id="3.30.40.10">
    <property type="entry name" value="Zinc/RING finger domain, C3HC4 (zinc finger)"/>
    <property type="match status" value="1"/>
</dbReference>
<dbReference type="InterPro" id="IPR004939">
    <property type="entry name" value="APC_su10/DOC_dom"/>
</dbReference>
<dbReference type="InterPro" id="IPR011989">
    <property type="entry name" value="ARM-like"/>
</dbReference>
<dbReference type="InterPro" id="IPR016024">
    <property type="entry name" value="ARM-type_fold"/>
</dbReference>
<dbReference type="InterPro" id="IPR056405">
    <property type="entry name" value="ARM_CUL7_CUL9"/>
</dbReference>
<dbReference type="InterPro" id="IPR047561">
    <property type="entry name" value="BRcat_RBR_CUL9"/>
</dbReference>
<dbReference type="InterPro" id="IPR021097">
    <property type="entry name" value="CPH_domain"/>
</dbReference>
<dbReference type="InterPro" id="IPR055486">
    <property type="entry name" value="CUL7/CUL9_N"/>
</dbReference>
<dbReference type="InterPro" id="IPR045093">
    <property type="entry name" value="Cullin"/>
</dbReference>
<dbReference type="InterPro" id="IPR016157">
    <property type="entry name" value="Cullin_CS"/>
</dbReference>
<dbReference type="InterPro" id="IPR016158">
    <property type="entry name" value="Cullin_homology"/>
</dbReference>
<dbReference type="InterPro" id="IPR036317">
    <property type="entry name" value="Cullin_homology_sf"/>
</dbReference>
<dbReference type="InterPro" id="IPR001373">
    <property type="entry name" value="Cullin_N"/>
</dbReference>
<dbReference type="InterPro" id="IPR019559">
    <property type="entry name" value="Cullin_neddylation_domain"/>
</dbReference>
<dbReference type="InterPro" id="IPR008979">
    <property type="entry name" value="Galactose-bd-like_sf"/>
</dbReference>
<dbReference type="InterPro" id="IPR002867">
    <property type="entry name" value="IBR_dom"/>
</dbReference>
<dbReference type="InterPro" id="IPR047560">
    <property type="entry name" value="Rcat_RBR_CUL9"/>
</dbReference>
<dbReference type="InterPro" id="IPR014722">
    <property type="entry name" value="Rib_uL2_dom2"/>
</dbReference>
<dbReference type="InterPro" id="IPR047562">
    <property type="entry name" value="RING-HC_RBR_CUL9"/>
</dbReference>
<dbReference type="InterPro" id="IPR044066">
    <property type="entry name" value="TRIAD_supradom"/>
</dbReference>
<dbReference type="InterPro" id="IPR036388">
    <property type="entry name" value="WH-like_DNA-bd_sf"/>
</dbReference>
<dbReference type="InterPro" id="IPR001841">
    <property type="entry name" value="Znf_RING"/>
</dbReference>
<dbReference type="InterPro" id="IPR013083">
    <property type="entry name" value="Znf_RING/FYVE/PHD"/>
</dbReference>
<dbReference type="InterPro" id="IPR017907">
    <property type="entry name" value="Znf_RING_CS"/>
</dbReference>
<dbReference type="PANTHER" id="PTHR22771">
    <property type="entry name" value="CULLIN AND GALACTOSE-BINDING DOMAIN-CONTAINING"/>
    <property type="match status" value="1"/>
</dbReference>
<dbReference type="PANTHER" id="PTHR22771:SF2">
    <property type="entry name" value="CULLIN-9"/>
    <property type="match status" value="1"/>
</dbReference>
<dbReference type="Pfam" id="PF03256">
    <property type="entry name" value="ANAPC10"/>
    <property type="match status" value="1"/>
</dbReference>
<dbReference type="Pfam" id="PF24742">
    <property type="entry name" value="ARM_CUL7_CUL9"/>
    <property type="match status" value="1"/>
</dbReference>
<dbReference type="Pfam" id="PF11515">
    <property type="entry name" value="Cul7"/>
    <property type="match status" value="1"/>
</dbReference>
<dbReference type="Pfam" id="PF23168">
    <property type="entry name" value="CUL7_CUL9_N"/>
    <property type="match status" value="1"/>
</dbReference>
<dbReference type="Pfam" id="PF00888">
    <property type="entry name" value="Cullin"/>
    <property type="match status" value="1"/>
</dbReference>
<dbReference type="Pfam" id="PF01485">
    <property type="entry name" value="IBR"/>
    <property type="match status" value="1"/>
</dbReference>
<dbReference type="Pfam" id="PF22191">
    <property type="entry name" value="IBR_1"/>
    <property type="match status" value="1"/>
</dbReference>
<dbReference type="SMART" id="SM01337">
    <property type="entry name" value="APC10"/>
    <property type="match status" value="1"/>
</dbReference>
<dbReference type="SMART" id="SM00884">
    <property type="entry name" value="Cullin_Nedd8"/>
    <property type="match status" value="1"/>
</dbReference>
<dbReference type="SMART" id="SM00647">
    <property type="entry name" value="IBR"/>
    <property type="match status" value="2"/>
</dbReference>
<dbReference type="SUPFAM" id="SSF48371">
    <property type="entry name" value="ARM repeat"/>
    <property type="match status" value="1"/>
</dbReference>
<dbReference type="SUPFAM" id="SSF75632">
    <property type="entry name" value="Cullin homology domain"/>
    <property type="match status" value="1"/>
</dbReference>
<dbReference type="SUPFAM" id="SSF49785">
    <property type="entry name" value="Galactose-binding domain-like"/>
    <property type="match status" value="1"/>
</dbReference>
<dbReference type="SUPFAM" id="SSF57850">
    <property type="entry name" value="RING/U-box"/>
    <property type="match status" value="2"/>
</dbReference>
<dbReference type="SUPFAM" id="SSF63748">
    <property type="entry name" value="Tudor/PWWP/MBT"/>
    <property type="match status" value="1"/>
</dbReference>
<dbReference type="PROSITE" id="PS01256">
    <property type="entry name" value="CULLIN_1"/>
    <property type="match status" value="1"/>
</dbReference>
<dbReference type="PROSITE" id="PS50069">
    <property type="entry name" value="CULLIN_2"/>
    <property type="match status" value="1"/>
</dbReference>
<dbReference type="PROSITE" id="PS51284">
    <property type="entry name" value="DOC"/>
    <property type="match status" value="1"/>
</dbReference>
<dbReference type="PROSITE" id="PS51873">
    <property type="entry name" value="TRIAD"/>
    <property type="match status" value="1"/>
</dbReference>
<dbReference type="PROSITE" id="PS00518">
    <property type="entry name" value="ZF_RING_1"/>
    <property type="match status" value="1"/>
</dbReference>
<dbReference type="PROSITE" id="PS50089">
    <property type="entry name" value="ZF_RING_2"/>
    <property type="match status" value="1"/>
</dbReference>
<reference key="1">
    <citation type="journal article" date="2003" name="Cell">
        <title>Parc: a cytoplasmic anchor for p53.</title>
        <authorList>
            <person name="Nikolaev A.Y."/>
            <person name="Li M."/>
            <person name="Puskas N."/>
            <person name="Qin J."/>
            <person name="Gu W."/>
        </authorList>
    </citation>
    <scope>NUCLEOTIDE SEQUENCE [MRNA] (ISOFORM 1)</scope>
    <scope>PROTEIN SEQUENCE OF 786-791; 2419-2431 AND 2432-2445</scope>
    <scope>INTERACTION WITH TP53</scope>
    <scope>SUBCELLULAR LOCATION</scope>
    <scope>TISSUE SPECIFICITY</scope>
    <scope>FUNCTION</scope>
    <source>
        <tissue>Cervix carcinoma</tissue>
    </source>
</reference>
<reference key="2">
    <citation type="submission" date="2001-06" db="EMBL/GenBank/DDBJ databases">
        <title>UbcH7 associated protein, H7AP1. A new member of the Parkin/Ariadne E3 ubiquitin Ligase (PAUL) family.</title>
        <authorList>
            <person name="Rose S.A."/>
            <person name="Ardley H.C."/>
            <person name="Tan N.G."/>
            <person name="Scott G.B."/>
            <person name="Markham A.F."/>
            <person name="Robinson P.A."/>
        </authorList>
    </citation>
    <scope>NUCLEOTIDE SEQUENCE [MRNA] (ISOFORM 1)</scope>
    <source>
        <tissue>Testis</tissue>
    </source>
</reference>
<reference key="3">
    <citation type="journal article" date="2007" name="BMC Genomics">
        <title>The full-ORF clone resource of the German cDNA consortium.</title>
        <authorList>
            <person name="Bechtel S."/>
            <person name="Rosenfelder H."/>
            <person name="Duda A."/>
            <person name="Schmidt C.P."/>
            <person name="Ernst U."/>
            <person name="Wellenreuther R."/>
            <person name="Mehrle A."/>
            <person name="Schuster C."/>
            <person name="Bahr A."/>
            <person name="Bloecker H."/>
            <person name="Heubner D."/>
            <person name="Hoerlein A."/>
            <person name="Michel G."/>
            <person name="Wedler H."/>
            <person name="Koehrer K."/>
            <person name="Ottenwaelder B."/>
            <person name="Poustka A."/>
            <person name="Wiemann S."/>
            <person name="Schupp I."/>
        </authorList>
    </citation>
    <scope>NUCLEOTIDE SEQUENCE [LARGE SCALE MRNA] (ISOFORM 1)</scope>
    <source>
        <tissue>Amygdala</tissue>
        <tissue>Testis</tissue>
    </source>
</reference>
<reference key="4">
    <citation type="journal article" date="2003" name="Nature">
        <title>The DNA sequence and analysis of human chromosome 6.</title>
        <authorList>
            <person name="Mungall A.J."/>
            <person name="Palmer S.A."/>
            <person name="Sims S.K."/>
            <person name="Edwards C.A."/>
            <person name="Ashurst J.L."/>
            <person name="Wilming L."/>
            <person name="Jones M.C."/>
            <person name="Horton R."/>
            <person name="Hunt S.E."/>
            <person name="Scott C.E."/>
            <person name="Gilbert J.G.R."/>
            <person name="Clamp M.E."/>
            <person name="Bethel G."/>
            <person name="Milne S."/>
            <person name="Ainscough R."/>
            <person name="Almeida J.P."/>
            <person name="Ambrose K.D."/>
            <person name="Andrews T.D."/>
            <person name="Ashwell R.I.S."/>
            <person name="Babbage A.K."/>
            <person name="Bagguley C.L."/>
            <person name="Bailey J."/>
            <person name="Banerjee R."/>
            <person name="Barker D.J."/>
            <person name="Barlow K.F."/>
            <person name="Bates K."/>
            <person name="Beare D.M."/>
            <person name="Beasley H."/>
            <person name="Beasley O."/>
            <person name="Bird C.P."/>
            <person name="Blakey S.E."/>
            <person name="Bray-Allen S."/>
            <person name="Brook J."/>
            <person name="Brown A.J."/>
            <person name="Brown J.Y."/>
            <person name="Burford D.C."/>
            <person name="Burrill W."/>
            <person name="Burton J."/>
            <person name="Carder C."/>
            <person name="Carter N.P."/>
            <person name="Chapman J.C."/>
            <person name="Clark S.Y."/>
            <person name="Clark G."/>
            <person name="Clee C.M."/>
            <person name="Clegg S."/>
            <person name="Cobley V."/>
            <person name="Collier R.E."/>
            <person name="Collins J.E."/>
            <person name="Colman L.K."/>
            <person name="Corby N.R."/>
            <person name="Coville G.J."/>
            <person name="Culley K.M."/>
            <person name="Dhami P."/>
            <person name="Davies J."/>
            <person name="Dunn M."/>
            <person name="Earthrowl M.E."/>
            <person name="Ellington A.E."/>
            <person name="Evans K.A."/>
            <person name="Faulkner L."/>
            <person name="Francis M.D."/>
            <person name="Frankish A."/>
            <person name="Frankland J."/>
            <person name="French L."/>
            <person name="Garner P."/>
            <person name="Garnett J."/>
            <person name="Ghori M.J."/>
            <person name="Gilby L.M."/>
            <person name="Gillson C.J."/>
            <person name="Glithero R.J."/>
            <person name="Grafham D.V."/>
            <person name="Grant M."/>
            <person name="Gribble S."/>
            <person name="Griffiths C."/>
            <person name="Griffiths M.N.D."/>
            <person name="Hall R."/>
            <person name="Halls K.S."/>
            <person name="Hammond S."/>
            <person name="Harley J.L."/>
            <person name="Hart E.A."/>
            <person name="Heath P.D."/>
            <person name="Heathcott R."/>
            <person name="Holmes S.J."/>
            <person name="Howden P.J."/>
            <person name="Howe K.L."/>
            <person name="Howell G.R."/>
            <person name="Huckle E."/>
            <person name="Humphray S.J."/>
            <person name="Humphries M.D."/>
            <person name="Hunt A.R."/>
            <person name="Johnson C.M."/>
            <person name="Joy A.A."/>
            <person name="Kay M."/>
            <person name="Keenan S.J."/>
            <person name="Kimberley A.M."/>
            <person name="King A."/>
            <person name="Laird G.K."/>
            <person name="Langford C."/>
            <person name="Lawlor S."/>
            <person name="Leongamornlert D.A."/>
            <person name="Leversha M."/>
            <person name="Lloyd C.R."/>
            <person name="Lloyd D.M."/>
            <person name="Loveland J.E."/>
            <person name="Lovell J."/>
            <person name="Martin S."/>
            <person name="Mashreghi-Mohammadi M."/>
            <person name="Maslen G.L."/>
            <person name="Matthews L."/>
            <person name="McCann O.T."/>
            <person name="McLaren S.J."/>
            <person name="McLay K."/>
            <person name="McMurray A."/>
            <person name="Moore M.J.F."/>
            <person name="Mullikin J.C."/>
            <person name="Niblett D."/>
            <person name="Nickerson T."/>
            <person name="Novik K.L."/>
            <person name="Oliver K."/>
            <person name="Overton-Larty E.K."/>
            <person name="Parker A."/>
            <person name="Patel R."/>
            <person name="Pearce A.V."/>
            <person name="Peck A.I."/>
            <person name="Phillimore B.J.C.T."/>
            <person name="Phillips S."/>
            <person name="Plumb R.W."/>
            <person name="Porter K.M."/>
            <person name="Ramsey Y."/>
            <person name="Ranby S.A."/>
            <person name="Rice C.M."/>
            <person name="Ross M.T."/>
            <person name="Searle S.M."/>
            <person name="Sehra H.K."/>
            <person name="Sheridan E."/>
            <person name="Skuce C.D."/>
            <person name="Smith S."/>
            <person name="Smith M."/>
            <person name="Spraggon L."/>
            <person name="Squares S.L."/>
            <person name="Steward C.A."/>
            <person name="Sycamore N."/>
            <person name="Tamlyn-Hall G."/>
            <person name="Tester J."/>
            <person name="Theaker A.J."/>
            <person name="Thomas D.W."/>
            <person name="Thorpe A."/>
            <person name="Tracey A."/>
            <person name="Tromans A."/>
            <person name="Tubby B."/>
            <person name="Wall M."/>
            <person name="Wallis J.M."/>
            <person name="West A.P."/>
            <person name="White S.S."/>
            <person name="Whitehead S.L."/>
            <person name="Whittaker H."/>
            <person name="Wild A."/>
            <person name="Willey D.J."/>
            <person name="Wilmer T.E."/>
            <person name="Wood J.M."/>
            <person name="Wray P.W."/>
            <person name="Wyatt J.C."/>
            <person name="Young L."/>
            <person name="Younger R.M."/>
            <person name="Bentley D.R."/>
            <person name="Coulson A."/>
            <person name="Durbin R.M."/>
            <person name="Hubbard T."/>
            <person name="Sulston J.E."/>
            <person name="Dunham I."/>
            <person name="Rogers J."/>
            <person name="Beck S."/>
        </authorList>
    </citation>
    <scope>NUCLEOTIDE SEQUENCE [LARGE SCALE GENOMIC DNA]</scope>
</reference>
<reference key="5">
    <citation type="submission" date="2005-07" db="EMBL/GenBank/DDBJ databases">
        <authorList>
            <person name="Mural R.J."/>
            <person name="Istrail S."/>
            <person name="Sutton G.G."/>
            <person name="Florea L."/>
            <person name="Halpern A.L."/>
            <person name="Mobarry C.M."/>
            <person name="Lippert R."/>
            <person name="Walenz B."/>
            <person name="Shatkay H."/>
            <person name="Dew I."/>
            <person name="Miller J.R."/>
            <person name="Flanigan M.J."/>
            <person name="Edwards N.J."/>
            <person name="Bolanos R."/>
            <person name="Fasulo D."/>
            <person name="Halldorsson B.V."/>
            <person name="Hannenhalli S."/>
            <person name="Turner R."/>
            <person name="Yooseph S."/>
            <person name="Lu F."/>
            <person name="Nusskern D.R."/>
            <person name="Shue B.C."/>
            <person name="Zheng X.H."/>
            <person name="Zhong F."/>
            <person name="Delcher A.L."/>
            <person name="Huson D.H."/>
            <person name="Kravitz S.A."/>
            <person name="Mouchard L."/>
            <person name="Reinert K."/>
            <person name="Remington K.A."/>
            <person name="Clark A.G."/>
            <person name="Waterman M.S."/>
            <person name="Eichler E.E."/>
            <person name="Adams M.D."/>
            <person name="Hunkapiller M.W."/>
            <person name="Myers E.W."/>
            <person name="Venter J.C."/>
        </authorList>
    </citation>
    <scope>NUCLEOTIDE SEQUENCE [LARGE SCALE GENOMIC DNA]</scope>
</reference>
<reference key="6">
    <citation type="journal article" date="2004" name="Nat. Genet.">
        <title>Complete sequencing and characterization of 21,243 full-length human cDNAs.</title>
        <authorList>
            <person name="Ota T."/>
            <person name="Suzuki Y."/>
            <person name="Nishikawa T."/>
            <person name="Otsuki T."/>
            <person name="Sugiyama T."/>
            <person name="Irie R."/>
            <person name="Wakamatsu A."/>
            <person name="Hayashi K."/>
            <person name="Sato H."/>
            <person name="Nagai K."/>
            <person name="Kimura K."/>
            <person name="Makita H."/>
            <person name="Sekine M."/>
            <person name="Obayashi M."/>
            <person name="Nishi T."/>
            <person name="Shibahara T."/>
            <person name="Tanaka T."/>
            <person name="Ishii S."/>
            <person name="Yamamoto J."/>
            <person name="Saito K."/>
            <person name="Kawai Y."/>
            <person name="Isono Y."/>
            <person name="Nakamura Y."/>
            <person name="Nagahari K."/>
            <person name="Murakami K."/>
            <person name="Yasuda T."/>
            <person name="Iwayanagi T."/>
            <person name="Wagatsuma M."/>
            <person name="Shiratori A."/>
            <person name="Sudo H."/>
            <person name="Hosoiri T."/>
            <person name="Kaku Y."/>
            <person name="Kodaira H."/>
            <person name="Kondo H."/>
            <person name="Sugawara M."/>
            <person name="Takahashi M."/>
            <person name="Kanda K."/>
            <person name="Yokoi T."/>
            <person name="Furuya T."/>
            <person name="Kikkawa E."/>
            <person name="Omura Y."/>
            <person name="Abe K."/>
            <person name="Kamihara K."/>
            <person name="Katsuta N."/>
            <person name="Sato K."/>
            <person name="Tanikawa M."/>
            <person name="Yamazaki M."/>
            <person name="Ninomiya K."/>
            <person name="Ishibashi T."/>
            <person name="Yamashita H."/>
            <person name="Murakawa K."/>
            <person name="Fujimori K."/>
            <person name="Tanai H."/>
            <person name="Kimata M."/>
            <person name="Watanabe M."/>
            <person name="Hiraoka S."/>
            <person name="Chiba Y."/>
            <person name="Ishida S."/>
            <person name="Ono Y."/>
            <person name="Takiguchi S."/>
            <person name="Watanabe S."/>
            <person name="Yosida M."/>
            <person name="Hotuta T."/>
            <person name="Kusano J."/>
            <person name="Kanehori K."/>
            <person name="Takahashi-Fujii A."/>
            <person name="Hara H."/>
            <person name="Tanase T.-O."/>
            <person name="Nomura Y."/>
            <person name="Togiya S."/>
            <person name="Komai F."/>
            <person name="Hara R."/>
            <person name="Takeuchi K."/>
            <person name="Arita M."/>
            <person name="Imose N."/>
            <person name="Musashino K."/>
            <person name="Yuuki H."/>
            <person name="Oshima A."/>
            <person name="Sasaki N."/>
            <person name="Aotsuka S."/>
            <person name="Yoshikawa Y."/>
            <person name="Matsunawa H."/>
            <person name="Ichihara T."/>
            <person name="Shiohata N."/>
            <person name="Sano S."/>
            <person name="Moriya S."/>
            <person name="Momiyama H."/>
            <person name="Satoh N."/>
            <person name="Takami S."/>
            <person name="Terashima Y."/>
            <person name="Suzuki O."/>
            <person name="Nakagawa S."/>
            <person name="Senoh A."/>
            <person name="Mizoguchi H."/>
            <person name="Goto Y."/>
            <person name="Shimizu F."/>
            <person name="Wakebe H."/>
            <person name="Hishigaki H."/>
            <person name="Watanabe T."/>
            <person name="Sugiyama A."/>
            <person name="Takemoto M."/>
            <person name="Kawakami B."/>
            <person name="Yamazaki M."/>
            <person name="Watanabe K."/>
            <person name="Kumagai A."/>
            <person name="Itakura S."/>
            <person name="Fukuzumi Y."/>
            <person name="Fujimori Y."/>
            <person name="Komiyama M."/>
            <person name="Tashiro H."/>
            <person name="Tanigami A."/>
            <person name="Fujiwara T."/>
            <person name="Ono T."/>
            <person name="Yamada K."/>
            <person name="Fujii Y."/>
            <person name="Ozaki K."/>
            <person name="Hirao M."/>
            <person name="Ohmori Y."/>
            <person name="Kawabata A."/>
            <person name="Hikiji T."/>
            <person name="Kobatake N."/>
            <person name="Inagaki H."/>
            <person name="Ikema Y."/>
            <person name="Okamoto S."/>
            <person name="Okitani R."/>
            <person name="Kawakami T."/>
            <person name="Noguchi S."/>
            <person name="Itoh T."/>
            <person name="Shigeta K."/>
            <person name="Senba T."/>
            <person name="Matsumura K."/>
            <person name="Nakajima Y."/>
            <person name="Mizuno T."/>
            <person name="Morinaga M."/>
            <person name="Sasaki M."/>
            <person name="Togashi T."/>
            <person name="Oyama M."/>
            <person name="Hata H."/>
            <person name="Watanabe M."/>
            <person name="Komatsu T."/>
            <person name="Mizushima-Sugano J."/>
            <person name="Satoh T."/>
            <person name="Shirai Y."/>
            <person name="Takahashi Y."/>
            <person name="Nakagawa K."/>
            <person name="Okumura K."/>
            <person name="Nagase T."/>
            <person name="Nomura N."/>
            <person name="Kikuchi H."/>
            <person name="Masuho Y."/>
            <person name="Yamashita R."/>
            <person name="Nakai K."/>
            <person name="Yada T."/>
            <person name="Nakamura Y."/>
            <person name="Ohara O."/>
            <person name="Isogai T."/>
            <person name="Sugano S."/>
        </authorList>
    </citation>
    <scope>NUCLEOTIDE SEQUENCE [LARGE SCALE MRNA] OF 1-662 (ISOFORM 2)</scope>
    <scope>NUCLEOTIDE SEQUENCE [LARGE SCALE MRNA] OF 528-662 (ISOFORMS 1/2)</scope>
    <source>
        <tissue>Chondrocyte</tissue>
        <tissue>Thymus</tissue>
    </source>
</reference>
<reference key="7">
    <citation type="journal article" date="1998" name="DNA Res.">
        <title>Prediction of the coding sequences of unidentified human genes. X. The complete sequences of 100 new cDNA clones from brain which can code for large proteins in vitro.</title>
        <authorList>
            <person name="Ishikawa K."/>
            <person name="Nagase T."/>
            <person name="Suyama M."/>
            <person name="Miyajima N."/>
            <person name="Tanaka A."/>
            <person name="Kotani H."/>
            <person name="Nomura N."/>
            <person name="Ohara O."/>
        </authorList>
    </citation>
    <scope>NUCLEOTIDE SEQUENCE [LARGE SCALE MRNA] OF 765-2517 (ISOFORM 1)</scope>
    <source>
        <tissue>Brain</tissue>
    </source>
</reference>
<reference key="8">
    <citation type="journal article" date="2004" name="Genome Res.">
        <title>The status, quality, and expansion of the NIH full-length cDNA project: the Mammalian Gene Collection (MGC).</title>
        <authorList>
            <consortium name="The MGC Project Team"/>
        </authorList>
    </citation>
    <scope>NUCLEOTIDE SEQUENCE [LARGE SCALE MRNA] OF 1554-2517 (ISOFORM 1)</scope>
    <source>
        <tissue>Lung</tissue>
    </source>
</reference>
<reference key="9">
    <citation type="journal article" date="1999" name="J. Biol. Chem.">
        <title>The ubiquitin-conjugating enzymes UbcH7 and UbcH8 interact with RING finger/IBR motif-containing domains of HHARI and H7-AP1.</title>
        <authorList>
            <person name="Moynihan T.P."/>
            <person name="Ardley H.C."/>
            <person name="Nuber U."/>
            <person name="Rose S.A."/>
            <person name="Jones P.F."/>
            <person name="Markham A.F."/>
            <person name="Scheffner M."/>
            <person name="Robinson P.A."/>
        </authorList>
    </citation>
    <scope>INTERACTION WITH UBCH7 AND UBCH8</scope>
</reference>
<reference key="10">
    <citation type="journal article" date="2005" name="Mol. Cell. Biol.">
        <title>Dimerization of CUL7 and PARC is not required for all CUL7 functions and mouse development.</title>
        <authorList>
            <person name="Skaar J.R."/>
            <person name="Arai T."/>
            <person name="DeCaprio J.A."/>
        </authorList>
    </citation>
    <scope>INTERACTION WITH CUL7</scope>
</reference>
<reference key="11">
    <citation type="journal article" date="2007" name="Cancer Res.">
        <title>PARC and CUL7 form atypical cullin RING ligase complexes.</title>
        <authorList>
            <person name="Skaar J.R."/>
            <person name="Florens L."/>
            <person name="Tsutsumi T."/>
            <person name="Arai T."/>
            <person name="Tron A."/>
            <person name="Swanson S.K."/>
            <person name="Washburn M.P."/>
            <person name="DeCaprio J.A."/>
        </authorList>
    </citation>
    <scope>FUNCTION</scope>
    <scope>INTERACTION WITH CUL7; RBX1 AND TP53</scope>
    <scope>NEDDYLATION</scope>
</reference>
<reference key="12">
    <citation type="journal article" date="2013" name="J. Proteome Res.">
        <title>Toward a comprehensive characterization of a human cancer cell phosphoproteome.</title>
        <authorList>
            <person name="Zhou H."/>
            <person name="Di Palma S."/>
            <person name="Preisinger C."/>
            <person name="Peng M."/>
            <person name="Polat A.N."/>
            <person name="Heck A.J."/>
            <person name="Mohammed S."/>
        </authorList>
    </citation>
    <scope>PHOSPHORYLATION [LARGE SCALE ANALYSIS] AT SER-976; SER-1457 AND SER-2436</scope>
    <scope>IDENTIFICATION BY MASS SPECTROMETRY [LARGE SCALE ANALYSIS]</scope>
    <source>
        <tissue>Cervix carcinoma</tissue>
        <tissue>Erythroleukemia</tissue>
    </source>
</reference>
<reference key="13">
    <citation type="journal article" date="2014" name="Mol. Cell">
        <title>CUL9 mediates the functions of the 3M complex and ubiquitylates survivin to maintain genome integrity.</title>
        <authorList>
            <person name="Li Z."/>
            <person name="Pei X.H."/>
            <person name="Yan J."/>
            <person name="Yan F."/>
            <person name="Cappell K.M."/>
            <person name="Whitehurst A.W."/>
            <person name="Xiong Y."/>
        </authorList>
    </citation>
    <scope>FUNCTION</scope>
    <scope>INTERACTION WITH CUL7 AND RBX1</scope>
</reference>
<reference evidence="14" key="14">
    <citation type="submission" date="2007-08" db="PDB data bank">
        <title>NMR Solution Structure of PARC CPH Domain.</title>
        <authorList>
            <person name="Kaustov L."/>
            <person name="Liao J.C.C."/>
            <person name="Lemak S."/>
            <person name="Duan S."/>
            <person name="Muhandiram R."/>
            <person name="Karra M."/>
            <person name="Srisailam S.H."/>
            <person name="Sundstrom M."/>
            <person name="Weigelt J."/>
            <person name="Edwards A.M."/>
            <person name="Dhe-Paganon S."/>
            <person name="Arrowsmith C.H."/>
        </authorList>
    </citation>
    <scope>STRUCTURE BY NMR OF 366-466</scope>
</reference>
<reference evidence="15 16 17" key="15">
    <citation type="journal article" date="2024" name="Nat. Struct. Mol. Biol.">
        <title>Noncanonical assembly, neddylation and chimeric cullin-RING/RBR ubiquitylation by the 1.8 MDa CUL9 E3 ligase complex.</title>
        <authorList>
            <person name="Horn-Ghetko D."/>
            <person name="Hopf L.V.M."/>
            <person name="Tripathi-Giesgen I."/>
            <person name="Du J."/>
            <person name="Kostrhon S."/>
            <person name="Vu D.T."/>
            <person name="Beier V."/>
            <person name="Steigenberger B."/>
            <person name="Prabu J.R."/>
            <person name="Stier L."/>
            <person name="Bruss E.M."/>
            <person name="Mann M."/>
            <person name="Xiong Y."/>
            <person name="Schulman B.A."/>
        </authorList>
    </citation>
    <scope>STRUCTURE BY ELECTRON MICROSCOPY (3.37 ANGSTROMS) IN COMPLEX WITH ZINC; RBX1 AND NEDD8</scope>
    <scope>FUNCTION</scope>
    <scope>SUBUNIT</scope>
    <scope>DOMAIN</scope>
    <scope>AUTOUBIQUITINATION AT LYS-87</scope>
    <scope>NEDDYLATION AT LYS-1881</scope>
    <scope>MUTAGENESIS OF ARG-125; TYR-152; 1650-PHE--ASP-1690; LYS-1881 AND CYS-2249</scope>
</reference>
<gene>
    <name type="primary">CUL9</name>
    <name type="synonym">H7AP1</name>
    <name type="synonym">KIAA0708</name>
    <name type="synonym">PARC</name>
</gene>
<organism>
    <name type="scientific">Homo sapiens</name>
    <name type="common">Human</name>
    <dbReference type="NCBI Taxonomy" id="9606"/>
    <lineage>
        <taxon>Eukaryota</taxon>
        <taxon>Metazoa</taxon>
        <taxon>Chordata</taxon>
        <taxon>Craniata</taxon>
        <taxon>Vertebrata</taxon>
        <taxon>Euteleostomi</taxon>
        <taxon>Mammalia</taxon>
        <taxon>Eutheria</taxon>
        <taxon>Euarchontoglires</taxon>
        <taxon>Primates</taxon>
        <taxon>Haplorrhini</taxon>
        <taxon>Catarrhini</taxon>
        <taxon>Hominidae</taxon>
        <taxon>Homo</taxon>
    </lineage>
</organism>
<evidence type="ECO:0000255" key="1"/>
<evidence type="ECO:0000255" key="2">
    <source>
        <dbReference type="PROSITE-ProRule" id="PRU00330"/>
    </source>
</evidence>
<evidence type="ECO:0000255" key="3">
    <source>
        <dbReference type="PROSITE-ProRule" id="PRU00614"/>
    </source>
</evidence>
<evidence type="ECO:0000255" key="4">
    <source>
        <dbReference type="PROSITE-ProRule" id="PRU01221"/>
    </source>
</evidence>
<evidence type="ECO:0000256" key="5">
    <source>
        <dbReference type="SAM" id="MobiDB-lite"/>
    </source>
</evidence>
<evidence type="ECO:0000269" key="6">
    <source>
    </source>
</evidence>
<evidence type="ECO:0000269" key="7">
    <source>
    </source>
</evidence>
<evidence type="ECO:0000269" key="8">
    <source>
    </source>
</evidence>
<evidence type="ECO:0000269" key="9">
    <source>
    </source>
</evidence>
<evidence type="ECO:0000269" key="10">
    <source>
    </source>
</evidence>
<evidence type="ECO:0000269" key="11">
    <source>
    </source>
</evidence>
<evidence type="ECO:0000303" key="12">
    <source>
    </source>
</evidence>
<evidence type="ECO:0000305" key="13"/>
<evidence type="ECO:0007744" key="14">
    <source>
        <dbReference type="PDB" id="2JUF"/>
    </source>
</evidence>
<evidence type="ECO:0007744" key="15">
    <source>
        <dbReference type="PDB" id="8Q7E"/>
    </source>
</evidence>
<evidence type="ECO:0007744" key="16">
    <source>
        <dbReference type="PDB" id="8Q7H"/>
    </source>
</evidence>
<evidence type="ECO:0007744" key="17">
    <source>
        <dbReference type="PDB" id="8RHZ"/>
    </source>
</evidence>
<evidence type="ECO:0007744" key="18">
    <source>
    </source>
</evidence>
<evidence type="ECO:0007829" key="19">
    <source>
        <dbReference type="PDB" id="2JUF"/>
    </source>
</evidence>
<evidence type="ECO:0007829" key="20">
    <source>
        <dbReference type="PDB" id="8RHZ"/>
    </source>
</evidence>
<sequence length="2517" mass="281229">MVGERHAGDLMVPLGPRLQAYPEELIRQRPGHDGHPEYLIRWSVLKCGEVGKVGVEEGKAEHILMWLSAPEVYANCPGLLGERALSKGLQHEPAGVSGSFPRDPGGLDEVAMGEMEADVQALVRRAARQLAESGTPSLTAAVLHTIHVLSAYASIGPLTGVFRETGALDLLMHMLCNPEPQIRRSAGKMLQALAAHDAGSRAHVLLSLSQQDGIEQHMDFDSRYTLLELFAETTSSEEHCMAFEGIHLPQIPGKLLFSLVKRYLCVTSLLDQLNSSPELGAGDQSSPCATREKSRGQRELEFSMAVGNLISELVRSMGWARNLSEQGMSPPRPTRSIFQPYISGPSLLLPTIVTTPRRQGWVFRQRSEFSSRSGYGEYVQQTLQPGMRVRMLDDYEEISAGDEGEFRQSNNGIPPVQVFWQSTGRTYWVHWHMLEILGPEEATEDKASAAVEKGAGATVLGTAFPSWDWNPMDGLYPLPYLQPEPQKNERVGYLTQAEWWELLFFIKKLDLCEQQPIFQNLWKNLDETLGEKALGEISVSVEMAESLLQVLSSRFEGSTLNDLLNSQIYTKYGLLSNEPSSSSTSRNHSCTPDPEEESKSEASFSEEETESLKAKAEAPKTEAEPTKTRTETPMAQSDSQLFNQLLVTEGMTLPTEMKEAASEMARALRGPGPRSSLDQHVAAVVATVQISSLDTNLQLSGLSALSQAVEEVTERDHPLVRPDRSLREKLVKMLVELLTNQVGEKMVVVQALRLLYLLMTKHEWRPLFAREGGIYAVLVCMQEYKTSVLVQQAGLAALKMLAVASSSEIPTFVTGRDSIHSLFDAQMTREIFASIDSATRPGSESLLLTVPAAVILMLNTEGCSSAARNGLLLLNLLLCNHHTLGDQIITQELRDTLFRHSGIAPRTEPMPTTRTILMMLLNRYSEPPGSPERAALETPIIQGQDGSPELLIRSLVGGPSAELLLDLERVLCREGSPGGAVRPLLKRLQQETQPFLLLLRTLDAPGPNKTLLLSVLRVITRLLDFPEAMVLPWHEVLEPCLNCLSGPSSDSEIVQELTCFLHRLASMHKDYAVVLCCLGAKEILSKVLDKHSAQLLLGCELRDLVTECEKYAQLYSNLTSSILAGCIQMVLGQIEDHRRTHQPINIPFFDVFLRHLCQGSSVEVKEDKCWEKVEVSSNPHRASKLTDHNPKTYWESNGSTGSHYITLHMHRGVLVRQLTLLVASEDSSYMPARVVVFGGDSTSCIGTELNTVNVMPSASRVILLENLNRFWPIIQIRIKRCQQGGIDTRVRGVEVLGPKPTFWPLFREQLCRRTCLFYTIRAQAWSRDIAEDHRRLLQLCPRLNRVLRHEQNFADRFLPDDEAAQALGKTCWEALVSPLVQNITSPDAEGVSALGWLLDQYLEQRETSRNPLSRAASFASRVRRLCHLLVHVEPPPGPSPEPSTRPFSKNSKGRDRSPAPSPVLPSSSLRNITQCWLSVVQEQVSRFLAAAWRAPDFVPRYCKLYEHLQRAGSELFGPRAAFMLALRSGFSGALLQQSFLTAAHMSEQFARYIDQQIQGGLIGGAPGVEMLGQLQRHLEPIMVLSGLELATTFEHFYQHYMADRLLSFGSSWLEGAVLEQIGLCFPNRLPQLMLQSLSTSEELQRQFHLFQLQRLDKLFLEQEDEEEKRLEEEEEEEEEEEAEKELFIEDPSPAISILVLSPRCWPVSPLCYLYHPRKCLPTEFCDALDRFSSFYSQSQNHPVLDMGPHRRLQWTWLGRAELQFGKQILHVSTVQMWLLLKFNQTEEVSVETLLKDSDLSPELLLQALVPLTSGNGPLTLHEGQDFPHGGVLRLHEPGPQRSGEALWLIPPQAYLNVEKDEGRTLEQKRNLLSCLLVRILKAHGEKGLHIDQLVCLVLEAWQKGPNPPGTLGHTVAGGVACTSTDVLSCILHLLGQGYVKRRDDRPQILMYAAPEPMGPCRGQADVPFCGSQSETSKPSPEAVATLASLQLPAGRTMSPQEVEGLMKQTVRQVQETLNLEPDVAQHLLAHSHWGAEQLLQSYSEDPEPLLLAAGLCVHQAQAVPVRPDHCPVCVSPLGCDDDLPSLCCMHYCCKSCWNEYLTTRIEQNLVLNCTCPIADCPAQPTGAFIRAIVSSPEVISKYEKALLRGYVESCSNLTWCTNPQGCDRILCRQGLGCGTTCSKCGWASCFNCSFPEAHYPASCGHMSQWVDDGGYYDGMSVEAQSKHLAKLISKRCPSCQAPIEKNEGCLHMTCAKCNHGFCWRCLKSWKPNHKDYYNCSAMVSKAARQEKRFQDYNERCTFHHQAREFAVNLRNRVSAIHEVPPPRSFTFLNDACQGLEQARKVLAYACVYSFYSQDAEYMDVVEQQTENLELHTNALQILLEETLLRCRDLASSLRLLRADCLSTGMELLRRIQERLLAILQHSAQDFRVGLQSPSVEAWEAKGPNMPGSQPQASSGPEAEEEEEDDEDDVPEWQQDEFDEELDNDSFSYDESENLDQETFFFGDEEEDEDEAYD</sequence>
<comment type="function">
    <text evidence="7 9 10 11">Core component of a Cul9-RING ubiquitin-protein ligase complex composed of CUL9 and RBX1 (PubMed:38605244). The CUL9-RBX1 complex mediates ubiquitination and subsequent degradation of BIRC5 and is required to maintain microtubule dynamics and genome integrity. Acts downstream of the 3M complex, which inhibits the ubiquitination of BIRC5 (PubMed:24793696). The CUL9-RBX1 complex also mediates mono-ubiquitination of p53/TP53 (PubMed:38605244). Acts as a cytoplasmic anchor protein in p53/TP53-associated protein complex. Regulates the subcellular localization of p53/TP53 and its subsequent function (PubMed:12526791, PubMed:17332328). Ubiquitinates apurinic/apyrimidinic endodeoxyribonuclease APEX2 (PubMed:38605244). Ubiquitination by the CUL9-RBX1 complex is predominantly mediated by E2 ubiquitin-conjugating enzymes UBE2L3 and UBE2D2 (PubMed:38605244).</text>
</comment>
<comment type="subunit">
    <text evidence="6 7 8 9 10 11">Component of the Cul9-RING complex consisting of CUL9 and RBX1; the CUL9-RBX1 complex is a heterododecamer composed of six CUL9 and six RBX1 protomers (PubMed:38605244). Interacts (via C-terminal TRIAD/RBR supradomain) with E2 ubiquitin-conjugating enzyme UBE2L3 (PubMed:38605244). Interacts with CUL7; the interaction with the CUL7 component of the 3M complex leads to inhibition of CUL9 activity. The CUL7-CUL9 heterodimer seems to interact specifically with TP53, likely via the CPH domain (PubMed:17332328, PubMed:38605244). Forms a complex with p53/TP53 in the cytoplasm of unstressed cells. Interacts with UBCH7 and UBCH8 (PubMed:10521492).</text>
</comment>
<comment type="interaction">
    <interactant intactId="EBI-311123">
        <id>Q8IWT3</id>
    </interactant>
    <interactant intactId="EBI-366083">
        <id>P04637</id>
        <label>TP53</label>
    </interactant>
    <organismsDiffer>false</organismsDiffer>
    <experiments>15</experiments>
</comment>
<comment type="subcellular location">
    <subcellularLocation>
        <location evidence="7">Cytoplasm</location>
    </subcellularLocation>
</comment>
<comment type="alternative products">
    <event type="alternative splicing"/>
    <isoform>
        <id>Q8IWT3-1</id>
        <name>1</name>
        <sequence type="displayed"/>
    </isoform>
    <isoform>
        <id>Q8IWT3-3</id>
        <name>2</name>
        <sequence type="described" ref="VSP_009573"/>
    </isoform>
</comment>
<comment type="tissue specificity">
    <text evidence="7">Ubiquitously expressed in all tissues with highest expression in testis brain and kidney.</text>
</comment>
<comment type="domain">
    <text evidence="11">The C-terminal TRIAD/RBR supradomain is essential for ubiquitination activity.</text>
</comment>
<comment type="domain">
    <text evidence="6">The IBR domain is required for interaction with UBCH7 and UBCH8.</text>
</comment>
<comment type="domain">
    <text>The CPH and RING-type 1 domains are necessary for ubiquitination of TP53 by the CUL9-RBX1 complex.</text>
</comment>
<comment type="domain">
    <text evidence="11">The DOC domain is necessary for ubiquitination of APEX2 by the CUL9-RBX1 complex.</text>
</comment>
<comment type="PTM">
    <text evidence="11">Autoubiquitinated by the CUL9-RBX1 complex at Lys-87.</text>
</comment>
<comment type="PTM">
    <text evidence="9 11">Neddylated (PubMed:17332328, PubMed:38605244). Neddylation is mediated by E1 enzyme UBA3-NAE1 complex and E2 enzyme UBE2F (PubMed:38605244). Structural rearrangment of the C-terminal TRIAD/RBR supradomain may play a role in neddylation and deneddylation (PubMed:38605244).</text>
</comment>
<comment type="similarity">
    <text evidence="2">Belongs to the cullin family.</text>
</comment>
<comment type="sequence caution" evidence="13">
    <conflict type="miscellaneous discrepancy">
        <sequence resource="EMBL-CDS" id="BAC85207"/>
    </conflict>
    <text>Intron retention.</text>
</comment>
<comment type="sequence caution" evidence="13">
    <conflict type="miscellaneous discrepancy">
        <sequence resource="EMBL-CDS" id="BAC86090"/>
    </conflict>
    <text>Intron retention.</text>
</comment>
<protein>
    <recommendedName>
        <fullName>Cullin-9</fullName>
        <shortName>CUL-9</shortName>
    </recommendedName>
    <alternativeName>
        <fullName>UbcH7-associated protein 1</fullName>
    </alternativeName>
    <alternativeName>
        <fullName>p53-associated parkin-like cytoplasmic protein</fullName>
    </alternativeName>
</protein>
<keyword id="KW-0002">3D-structure</keyword>
<keyword id="KW-0025">Alternative splicing</keyword>
<keyword id="KW-0067">ATP-binding</keyword>
<keyword id="KW-0175">Coiled coil</keyword>
<keyword id="KW-0963">Cytoplasm</keyword>
<keyword id="KW-0903">Direct protein sequencing</keyword>
<keyword id="KW-1017">Isopeptide bond</keyword>
<keyword id="KW-0479">Metal-binding</keyword>
<keyword id="KW-0547">Nucleotide-binding</keyword>
<keyword id="KW-0597">Phosphoprotein</keyword>
<keyword id="KW-1267">Proteomics identification</keyword>
<keyword id="KW-1185">Reference proteome</keyword>
<keyword id="KW-0677">Repeat</keyword>
<keyword id="KW-0808">Transferase</keyword>
<keyword id="KW-0832">Ubl conjugation</keyword>
<keyword id="KW-0833">Ubl conjugation pathway</keyword>
<keyword id="KW-0862">Zinc</keyword>
<keyword id="KW-0863">Zinc-finger</keyword>
<feature type="chain" id="PRO_0000119815" description="Cullin-9">
    <location>
        <begin position="1"/>
        <end position="2517"/>
    </location>
</feature>
<feature type="domain" description="CPH" evidence="1">
    <location>
        <begin position="366"/>
        <end position="439"/>
    </location>
</feature>
<feature type="domain" description="DOC" evidence="3">
    <location>
        <begin position="1143"/>
        <end position="1322"/>
    </location>
</feature>
<feature type="zinc finger region" description="RING-type 1" evidence="4">
    <location>
        <begin position="2070"/>
        <end position="2120"/>
    </location>
</feature>
<feature type="zinc finger region" description="IBR-type" evidence="4">
    <location>
        <begin position="2140"/>
        <end position="2203"/>
    </location>
</feature>
<feature type="zinc finger region" description="RING-type 2; atypical" evidence="4">
    <location>
        <begin position="2236"/>
        <end position="2265"/>
    </location>
</feature>
<feature type="region of interest" description="Disordered" evidence="5">
    <location>
        <begin position="276"/>
        <end position="296"/>
    </location>
</feature>
<feature type="region of interest" description="Disordered" evidence="5">
    <location>
        <begin position="576"/>
        <end position="639"/>
    </location>
</feature>
<feature type="region of interest" description="Disordered" evidence="5">
    <location>
        <begin position="1432"/>
        <end position="1466"/>
    </location>
</feature>
<feature type="region of interest" description="Disordered" evidence="5">
    <location>
        <begin position="1664"/>
        <end position="1685"/>
    </location>
</feature>
<feature type="region of interest" description="TRIAD supradomain" evidence="4">
    <location>
        <begin position="2066"/>
        <end position="2283"/>
    </location>
</feature>
<feature type="region of interest" description="Disordered" evidence="5">
    <location>
        <begin position="2442"/>
        <end position="2517"/>
    </location>
</feature>
<feature type="coiled-coil region" evidence="1">
    <location>
        <begin position="1649"/>
        <end position="1691"/>
    </location>
</feature>
<feature type="coiled-coil region" evidence="1">
    <location>
        <begin position="2365"/>
        <end position="2385"/>
    </location>
</feature>
<feature type="compositionally biased region" description="Polar residues" evidence="5">
    <location>
        <begin position="276"/>
        <end position="288"/>
    </location>
</feature>
<feature type="compositionally biased region" description="Low complexity" evidence="5">
    <location>
        <begin position="576"/>
        <end position="589"/>
    </location>
</feature>
<feature type="compositionally biased region" description="Acidic residues" evidence="5">
    <location>
        <begin position="593"/>
        <end position="609"/>
    </location>
</feature>
<feature type="compositionally biased region" description="Basic and acidic residues" evidence="5">
    <location>
        <begin position="610"/>
        <end position="630"/>
    </location>
</feature>
<feature type="compositionally biased region" description="Pro residues" evidence="5">
    <location>
        <begin position="1433"/>
        <end position="1443"/>
    </location>
</feature>
<feature type="compositionally biased region" description="Acidic residues" evidence="5">
    <location>
        <begin position="1664"/>
        <end position="1683"/>
    </location>
</feature>
<feature type="compositionally biased region" description="Acidic residues" evidence="5">
    <location>
        <begin position="2461"/>
        <end position="2499"/>
    </location>
</feature>
<feature type="compositionally biased region" description="Acidic residues" evidence="5">
    <location>
        <begin position="2506"/>
        <end position="2517"/>
    </location>
</feature>
<feature type="active site" evidence="4">
    <location>
        <position position="2249"/>
    </location>
</feature>
<feature type="binding site" evidence="1">
    <location>
        <begin position="1363"/>
        <end position="1370"/>
    </location>
    <ligand>
        <name>ATP</name>
        <dbReference type="ChEBI" id="CHEBI:30616"/>
    </ligand>
</feature>
<feature type="binding site" evidence="4 11 16">
    <location>
        <position position="2070"/>
    </location>
    <ligand>
        <name>Zn(2+)</name>
        <dbReference type="ChEBI" id="CHEBI:29105"/>
        <label>1</label>
    </ligand>
</feature>
<feature type="binding site" evidence="4 11 16">
    <location>
        <position position="2073"/>
    </location>
    <ligand>
        <name>Zn(2+)</name>
        <dbReference type="ChEBI" id="CHEBI:29105"/>
        <label>1</label>
    </ligand>
</feature>
<feature type="binding site" evidence="4 11 16">
    <location>
        <position position="2088"/>
    </location>
    <ligand>
        <name>Zn(2+)</name>
        <dbReference type="ChEBI" id="CHEBI:29105"/>
        <label>2</label>
    </ligand>
</feature>
<feature type="binding site" evidence="4 11 16">
    <location>
        <position position="2090"/>
    </location>
    <ligand>
        <name>Zn(2+)</name>
        <dbReference type="ChEBI" id="CHEBI:29105"/>
        <label>2</label>
    </ligand>
</feature>
<feature type="binding site" evidence="4 11 16">
    <location>
        <position position="2093"/>
    </location>
    <ligand>
        <name>Zn(2+)</name>
        <dbReference type="ChEBI" id="CHEBI:29105"/>
        <label>1</label>
    </ligand>
</feature>
<feature type="binding site" evidence="4 11 16">
    <location>
        <position position="2096"/>
    </location>
    <ligand>
        <name>Zn(2+)</name>
        <dbReference type="ChEBI" id="CHEBI:29105"/>
        <label>1</label>
    </ligand>
</feature>
<feature type="binding site" evidence="4 11 16">
    <location>
        <position position="2115"/>
    </location>
    <ligand>
        <name>Zn(2+)</name>
        <dbReference type="ChEBI" id="CHEBI:29105"/>
        <label>2</label>
    </ligand>
</feature>
<feature type="binding site" evidence="4 11 16">
    <location>
        <position position="2120"/>
    </location>
    <ligand>
        <name>Zn(2+)</name>
        <dbReference type="ChEBI" id="CHEBI:29105"/>
        <label>2</label>
    </ligand>
</feature>
<feature type="binding site" evidence="4 11 16">
    <location>
        <position position="2160"/>
    </location>
    <ligand>
        <name>Zn(2+)</name>
        <dbReference type="ChEBI" id="CHEBI:29105"/>
        <label>3</label>
    </ligand>
</feature>
<feature type="binding site" evidence="4 11 16">
    <location>
        <position position="2166"/>
    </location>
    <ligand>
        <name>Zn(2+)</name>
        <dbReference type="ChEBI" id="CHEBI:29105"/>
        <label>3</label>
    </ligand>
</feature>
<feature type="binding site" evidence="4 11 16">
    <location>
        <position position="2181"/>
    </location>
    <ligand>
        <name>Zn(2+)</name>
        <dbReference type="ChEBI" id="CHEBI:29105"/>
        <label>3</label>
    </ligand>
</feature>
<feature type="binding site" evidence="4 11 16">
    <location>
        <position position="2184"/>
    </location>
    <ligand>
        <name>Zn(2+)</name>
        <dbReference type="ChEBI" id="CHEBI:29105"/>
        <label>3</label>
    </ligand>
</feature>
<feature type="binding site" evidence="4 11 16">
    <location>
        <position position="2189"/>
    </location>
    <ligand>
        <name>Zn(2+)</name>
        <dbReference type="ChEBI" id="CHEBI:29105"/>
        <label>4</label>
    </ligand>
</feature>
<feature type="binding site" evidence="4 11 16">
    <location>
        <position position="2192"/>
    </location>
    <ligand>
        <name>Zn(2+)</name>
        <dbReference type="ChEBI" id="CHEBI:29105"/>
        <label>4</label>
    </ligand>
</feature>
<feature type="binding site" evidence="4 11 16">
    <location>
        <position position="2198"/>
    </location>
    <ligand>
        <name>Zn(2+)</name>
        <dbReference type="ChEBI" id="CHEBI:29105"/>
        <label>4</label>
    </ligand>
</feature>
<feature type="binding site" evidence="4 11 16">
    <location>
        <position position="2203"/>
    </location>
    <ligand>
        <name>Zn(2+)</name>
        <dbReference type="ChEBI" id="CHEBI:29105"/>
        <label>4</label>
    </ligand>
</feature>
<feature type="binding site" evidence="4">
    <location>
        <position position="2236"/>
    </location>
    <ligand>
        <name>Zn(2+)</name>
        <dbReference type="ChEBI" id="CHEBI:29105"/>
        <label>5</label>
    </ligand>
</feature>
<feature type="binding site" evidence="4">
    <location>
        <position position="2239"/>
    </location>
    <ligand>
        <name>Zn(2+)</name>
        <dbReference type="ChEBI" id="CHEBI:29105"/>
        <label>5</label>
    </ligand>
</feature>
<feature type="binding site" evidence="4">
    <location>
        <position position="2254"/>
    </location>
    <ligand>
        <name>Zn(2+)</name>
        <dbReference type="ChEBI" id="CHEBI:29105"/>
        <label>5</label>
    </ligand>
</feature>
<feature type="binding site" evidence="4">
    <location>
        <position position="2257"/>
    </location>
    <ligand>
        <name>Zn(2+)</name>
        <dbReference type="ChEBI" id="CHEBI:29105"/>
        <label>5</label>
    </ligand>
</feature>
<feature type="binding site" evidence="4">
    <location>
        <position position="2262"/>
    </location>
    <ligand>
        <name>Zn(2+)</name>
        <dbReference type="ChEBI" id="CHEBI:29105"/>
        <label>6</label>
    </ligand>
</feature>
<feature type="binding site" evidence="4">
    <location>
        <position position="2265"/>
    </location>
    <ligand>
        <name>Zn(2+)</name>
        <dbReference type="ChEBI" id="CHEBI:29105"/>
        <label>6</label>
    </ligand>
</feature>
<feature type="binding site" evidence="4">
    <location>
        <position position="2273"/>
    </location>
    <ligand>
        <name>Zn(2+)</name>
        <dbReference type="ChEBI" id="CHEBI:29105"/>
        <label>6</label>
    </ligand>
</feature>
<feature type="binding site" evidence="4">
    <location>
        <position position="2279"/>
    </location>
    <ligand>
        <name>Zn(2+)</name>
        <dbReference type="ChEBI" id="CHEBI:29105"/>
        <label>6</label>
    </ligand>
</feature>
<feature type="modified residue" description="Phosphoserine" evidence="18">
    <location>
        <position position="976"/>
    </location>
</feature>
<feature type="modified residue" description="Phosphoserine" evidence="18">
    <location>
        <position position="1457"/>
    </location>
</feature>
<feature type="modified residue" description="Phosphoserine" evidence="18">
    <location>
        <position position="2436"/>
    </location>
</feature>
<feature type="cross-link" description="Glycyl lysine isopeptide (Lys-Gly) (interchain with G-Cter in ubiquitin)" evidence="11">
    <location>
        <position position="87"/>
    </location>
</feature>
<feature type="cross-link" description="Glycyl lysine isopeptide (Lys-Gly) (interchain with G-Cter in NEDD8)" evidence="11 16">
    <location>
        <position position="1881"/>
    </location>
</feature>
<feature type="splice variant" id="VSP_009573" description="In isoform 2." evidence="12">
    <location>
        <begin position="418"/>
        <end position="527"/>
    </location>
</feature>
<feature type="sequence variant" id="VAR_048844" description="In dbSNP:rs2273709.">
    <original>H</original>
    <variation>P</variation>
    <location>
        <position position="2058"/>
    </location>
</feature>
<feature type="sequence variant" id="VAR_048845" description="In dbSNP:rs11962520.">
    <original>T</original>
    <variation>I</variation>
    <location>
        <position position="2180"/>
    </location>
</feature>
<feature type="mutagenesis site" description="Dimeric; disrupts the hexamerization of the CUL9-RBX1 complex; when associated with A-152. Monomeric; abolishes ubiquitination of TP53; when associated with 1650-F--D-1690 del." evidence="11">
    <original>R</original>
    <variation>A</variation>
    <location>
        <position position="125"/>
    </location>
</feature>
<feature type="mutagenesis site" description="Dimeric; disrupts the hexamerization of the CUL9-RBX1 complex; when associated with A-125. Monomeric; abolishes ubiquitination of TP53; when associated with 1650-F--D-1690 del." evidence="11">
    <original>Y</original>
    <variation>A</variation>
    <location>
        <position position="152"/>
    </location>
</feature>
<feature type="mutagenesis site" description="Dimeric; disrupts the hexamerization of the CUL9-RBX1 complex and abolishes ubiquitination of TP53 and APEX2. Monomeric; abolishes ubiquitination of TP53 and APEX2; when associated with A-125 or A-152." evidence="11">
    <location>
        <begin position="1650"/>
        <end position="1690"/>
    </location>
</feature>
<feature type="mutagenesis site" description="Abolishes neddylation. Abolishes ubiquitination of TP53 and APEX2 by the CUL9-RBX1 complex." evidence="11">
    <original>K</original>
    <variation>R</variation>
    <location>
        <position position="1881"/>
    </location>
</feature>
<feature type="mutagenesis site" description="Abolishes ubiquitination of TP53 and APEX2 by the CUL9-RBX1 complex." evidence="11">
    <original>C</original>
    <variation>A</variation>
    <location>
        <position position="2249"/>
    </location>
</feature>
<feature type="sequence conflict" description="In Ref. 3; CAH18696." evidence="13" ref="3">
    <original>E</original>
    <variation>G</variation>
    <location>
        <position position="527"/>
    </location>
</feature>
<feature type="sequence conflict" description="In Ref. 1; AAN61516." evidence="13" ref="1">
    <original>E</original>
    <variation>K</variation>
    <location>
        <position position="663"/>
    </location>
</feature>
<feature type="sequence conflict" description="In Ref. 3; CAH18328." evidence="13" ref="3">
    <original>E</original>
    <variation>K</variation>
    <location>
        <position position="1171"/>
    </location>
</feature>
<feature type="sequence conflict" description="In Ref. 3; CAH18328." evidence="13" ref="3">
    <original>M</original>
    <variation>T</variation>
    <location>
        <position position="1230"/>
    </location>
</feature>
<feature type="sequence conflict" description="In Ref. 3; CAH18328." evidence="13" ref="3">
    <original>N</original>
    <variation>S</variation>
    <location>
        <position position="1268"/>
    </location>
</feature>
<feature type="sequence conflict" description="In Ref. 3; CAH18328." evidence="13" ref="3">
    <original>R</original>
    <variation>H</variation>
    <location>
        <position position="1277"/>
    </location>
</feature>
<feature type="sequence conflict" description="In Ref. 3; CAH18696." evidence="13" ref="3">
    <location>
        <begin position="1830"/>
        <end position="1857"/>
    </location>
</feature>
<feature type="sequence conflict" description="In Ref. 3; CAH18696." evidence="13" ref="3">
    <original>L</original>
    <variation>P</variation>
    <location>
        <position position="2049"/>
    </location>
</feature>
<feature type="sequence conflict" description="In Ref. 3; CAH18696." evidence="13" ref="3">
    <original>HQ</original>
    <variation>PL</variation>
    <location>
        <begin position="2058"/>
        <end position="2059"/>
    </location>
</feature>
<feature type="sequence conflict" description="In Ref. 5; EAX04163." evidence="13" ref="5">
    <original>V</original>
    <variation>VV</variation>
    <location>
        <position position="2345"/>
    </location>
</feature>
<feature type="strand" evidence="20">
    <location>
        <begin position="15"/>
        <end position="17"/>
    </location>
</feature>
<feature type="strand" evidence="20">
    <location>
        <begin position="19"/>
        <end position="25"/>
    </location>
</feature>
<feature type="strand" evidence="20">
    <location>
        <begin position="38"/>
        <end position="45"/>
    </location>
</feature>
<feature type="strand" evidence="20">
    <location>
        <begin position="63"/>
        <end position="67"/>
    </location>
</feature>
<feature type="helix" evidence="20">
    <location>
        <begin position="69"/>
        <end position="75"/>
    </location>
</feature>
<feature type="helix" evidence="20">
    <location>
        <begin position="110"/>
        <end position="131"/>
    </location>
</feature>
<feature type="turn" evidence="20">
    <location>
        <begin position="132"/>
        <end position="134"/>
    </location>
</feature>
<feature type="helix" evidence="20">
    <location>
        <begin position="136"/>
        <end position="153"/>
    </location>
</feature>
<feature type="helix" evidence="20">
    <location>
        <begin position="159"/>
        <end position="165"/>
    </location>
</feature>
<feature type="helix" evidence="20">
    <location>
        <begin position="167"/>
        <end position="174"/>
    </location>
</feature>
<feature type="helix" evidence="20">
    <location>
        <begin position="180"/>
        <end position="196"/>
    </location>
</feature>
<feature type="helix" evidence="20">
    <location>
        <begin position="199"/>
        <end position="210"/>
    </location>
</feature>
<feature type="helix" evidence="20">
    <location>
        <begin position="220"/>
        <end position="233"/>
    </location>
</feature>
<feature type="turn" evidence="20">
    <location>
        <begin position="237"/>
        <end position="239"/>
    </location>
</feature>
<feature type="helix" evidence="20">
    <location>
        <begin position="253"/>
        <end position="269"/>
    </location>
</feature>
<feature type="helix" evidence="20">
    <location>
        <begin position="295"/>
        <end position="316"/>
    </location>
</feature>
<feature type="helix" evidence="19">
    <location>
        <begin position="376"/>
        <end position="382"/>
    </location>
</feature>
<feature type="strand" evidence="19">
    <location>
        <begin position="388"/>
        <end position="393"/>
    </location>
</feature>
<feature type="strand" evidence="19">
    <location>
        <begin position="403"/>
        <end position="408"/>
    </location>
</feature>
<feature type="strand" evidence="19">
    <location>
        <begin position="411"/>
        <end position="413"/>
    </location>
</feature>
<feature type="strand" evidence="19">
    <location>
        <begin position="416"/>
        <end position="420"/>
    </location>
</feature>
<feature type="turn" evidence="19">
    <location>
        <begin position="421"/>
        <end position="424"/>
    </location>
</feature>
<feature type="strand" evidence="19">
    <location>
        <begin position="425"/>
        <end position="429"/>
    </location>
</feature>
<feature type="helix" evidence="19">
    <location>
        <begin position="431"/>
        <end position="433"/>
    </location>
</feature>
<feature type="turn" evidence="20">
    <location>
        <begin position="479"/>
        <end position="481"/>
    </location>
</feature>
<feature type="helix" evidence="20">
    <location>
        <begin position="496"/>
        <end position="507"/>
    </location>
</feature>
<feature type="helix" evidence="20">
    <location>
        <begin position="511"/>
        <end position="521"/>
    </location>
</feature>
<feature type="helix" evidence="20">
    <location>
        <begin position="541"/>
        <end position="551"/>
    </location>
</feature>
<feature type="turn" evidence="20">
    <location>
        <begin position="552"/>
        <end position="554"/>
    </location>
</feature>
<feature type="helix" evidence="20">
    <location>
        <begin position="561"/>
        <end position="565"/>
    </location>
</feature>
<feature type="helix" evidence="20">
    <location>
        <begin position="567"/>
        <end position="571"/>
    </location>
</feature>
<feature type="helix" evidence="20">
    <location>
        <begin position="983"/>
        <end position="990"/>
    </location>
</feature>
<feature type="helix" evidence="20">
    <location>
        <begin position="992"/>
        <end position="1002"/>
    </location>
</feature>
<feature type="helix" evidence="20">
    <location>
        <begin position="1009"/>
        <end position="1023"/>
    </location>
</feature>
<feature type="turn" evidence="20">
    <location>
        <begin position="1035"/>
        <end position="1037"/>
    </location>
</feature>
<feature type="helix" evidence="20">
    <location>
        <begin position="1038"/>
        <end position="1043"/>
    </location>
</feature>
<feature type="helix" evidence="20">
    <location>
        <begin position="1051"/>
        <end position="1067"/>
    </location>
</feature>
<feature type="helix" evidence="20">
    <location>
        <begin position="1069"/>
        <end position="1078"/>
    </location>
</feature>
<feature type="helix" evidence="20">
    <location>
        <begin position="1080"/>
        <end position="1083"/>
    </location>
</feature>
<feature type="helix" evidence="20">
    <location>
        <begin position="1100"/>
        <end position="1105"/>
    </location>
</feature>
<feature type="helix" evidence="20">
    <location>
        <begin position="1112"/>
        <end position="1140"/>
    </location>
</feature>
<feature type="helix" evidence="20">
    <location>
        <begin position="1149"/>
        <end position="1157"/>
    </location>
</feature>
<feature type="helix" evidence="20">
    <location>
        <begin position="1303"/>
        <end position="1329"/>
    </location>
</feature>
<feature type="helix" evidence="20">
    <location>
        <begin position="1333"/>
        <end position="1335"/>
    </location>
</feature>
<feature type="helix" evidence="20">
    <location>
        <begin position="1336"/>
        <end position="1356"/>
    </location>
</feature>
<feature type="helix" evidence="20">
    <location>
        <begin position="1361"/>
        <end position="1383"/>
    </location>
</feature>
<feature type="strand" evidence="20">
    <location>
        <begin position="1388"/>
        <end position="1390"/>
    </location>
</feature>
<feature type="helix" evidence="20">
    <location>
        <begin position="1393"/>
        <end position="1404"/>
    </location>
</feature>
<feature type="helix" evidence="20">
    <location>
        <begin position="1405"/>
        <end position="1409"/>
    </location>
</feature>
<feature type="strand" evidence="20">
    <location>
        <begin position="1410"/>
        <end position="1413"/>
    </location>
</feature>
<feature type="helix" evidence="20">
    <location>
        <begin position="1414"/>
        <end position="1430"/>
    </location>
</feature>
<feature type="helix" evidence="20">
    <location>
        <begin position="1469"/>
        <end position="1490"/>
    </location>
</feature>
<feature type="strand" evidence="20">
    <location>
        <begin position="1492"/>
        <end position="1494"/>
    </location>
</feature>
<feature type="helix" evidence="20">
    <location>
        <begin position="1497"/>
        <end position="1516"/>
    </location>
</feature>
<feature type="helix" evidence="20">
    <location>
        <begin position="1520"/>
        <end position="1535"/>
    </location>
</feature>
<feature type="helix" evidence="20">
    <location>
        <begin position="1539"/>
        <end position="1562"/>
    </location>
</feature>
<feature type="helix" evidence="20">
    <location>
        <begin position="1565"/>
        <end position="1581"/>
    </location>
</feature>
<feature type="helix" evidence="20">
    <location>
        <begin position="1582"/>
        <end position="1584"/>
    </location>
</feature>
<feature type="strand" evidence="20">
    <location>
        <begin position="1587"/>
        <end position="1589"/>
    </location>
</feature>
<feature type="helix" evidence="20">
    <location>
        <begin position="1590"/>
        <end position="1607"/>
    </location>
</feature>
<feature type="helix" evidence="20">
    <location>
        <begin position="1612"/>
        <end position="1621"/>
    </location>
</feature>
<feature type="helix" evidence="20">
    <location>
        <begin position="1629"/>
        <end position="1666"/>
    </location>
</feature>
<feature type="strand" evidence="20">
    <location>
        <begin position="1694"/>
        <end position="1700"/>
    </location>
</feature>
<feature type="turn" evidence="20">
    <location>
        <begin position="1702"/>
        <end position="1704"/>
    </location>
</feature>
<feature type="helix" evidence="20">
    <location>
        <begin position="1716"/>
        <end position="1718"/>
    </location>
</feature>
<feature type="helix" evidence="20">
    <location>
        <begin position="1722"/>
        <end position="1738"/>
    </location>
</feature>
<feature type="strand" evidence="20">
    <location>
        <begin position="1753"/>
        <end position="1764"/>
    </location>
</feature>
<feature type="strand" evidence="20">
    <location>
        <begin position="1767"/>
        <end position="1772"/>
    </location>
</feature>
<feature type="helix" evidence="20">
    <location>
        <begin position="1773"/>
        <end position="1782"/>
    </location>
</feature>
<feature type="strand" evidence="20">
    <location>
        <begin position="1785"/>
        <end position="1788"/>
    </location>
</feature>
<feature type="helix" evidence="20">
    <location>
        <begin position="1790"/>
        <end position="1797"/>
    </location>
</feature>
<feature type="helix" evidence="20">
    <location>
        <begin position="1801"/>
        <end position="1812"/>
    </location>
</feature>
<feature type="strand" evidence="20">
    <location>
        <begin position="1817"/>
        <end position="1820"/>
    </location>
</feature>
<feature type="strand" evidence="20">
    <location>
        <begin position="1832"/>
        <end position="1834"/>
    </location>
</feature>
<feature type="helix" evidence="20">
    <location>
        <begin position="1865"/>
        <end position="1882"/>
    </location>
</feature>
<feature type="helix" evidence="20">
    <location>
        <begin position="1890"/>
        <end position="1901"/>
    </location>
</feature>
<feature type="helix" evidence="20">
    <location>
        <begin position="1923"/>
        <end position="1935"/>
    </location>
</feature>
<feature type="strand" evidence="20">
    <location>
        <begin position="1938"/>
        <end position="1941"/>
    </location>
</feature>
<feature type="strand" evidence="20">
    <location>
        <begin position="1948"/>
        <end position="1951"/>
    </location>
</feature>
<feature type="helix" evidence="20">
    <location>
        <begin position="2298"/>
        <end position="2315"/>
    </location>
</feature>
<feature type="helix" evidence="20">
    <location>
        <begin position="2327"/>
        <end position="2353"/>
    </location>
</feature>
<feature type="helix" evidence="20">
    <location>
        <begin position="2362"/>
        <end position="2386"/>
    </location>
</feature>
<feature type="helix" evidence="20">
    <location>
        <begin position="2405"/>
        <end position="2429"/>
    </location>
</feature>